<keyword id="KW-0067">ATP-binding</keyword>
<keyword id="KW-0963">Cytoplasm</keyword>
<keyword id="KW-0235">DNA replication</keyword>
<keyword id="KW-0238">DNA-binding</keyword>
<keyword id="KW-0446">Lipid-binding</keyword>
<keyword id="KW-0547">Nucleotide-binding</keyword>
<reference key="1">
    <citation type="journal article" date="2008" name="DNA Res.">
        <title>Complete genome sequence and comparative analysis of the wild-type commensal Escherichia coli strain SE11 isolated from a healthy adult.</title>
        <authorList>
            <person name="Oshima K."/>
            <person name="Toh H."/>
            <person name="Ogura Y."/>
            <person name="Sasamoto H."/>
            <person name="Morita H."/>
            <person name="Park S.-H."/>
            <person name="Ooka T."/>
            <person name="Iyoda S."/>
            <person name="Taylor T.D."/>
            <person name="Hayashi T."/>
            <person name="Itoh K."/>
            <person name="Hattori M."/>
        </authorList>
    </citation>
    <scope>NUCLEOTIDE SEQUENCE [LARGE SCALE GENOMIC DNA]</scope>
    <source>
        <strain>SE11</strain>
    </source>
</reference>
<gene>
    <name evidence="1" type="primary">dnaA</name>
    <name type="ordered locus">ECSE_3988</name>
</gene>
<dbReference type="EMBL" id="AP009240">
    <property type="protein sequence ID" value="BAG79512.1"/>
    <property type="molecule type" value="Genomic_DNA"/>
</dbReference>
<dbReference type="RefSeq" id="WP_000059111.1">
    <property type="nucleotide sequence ID" value="NC_011415.1"/>
</dbReference>
<dbReference type="SMR" id="B6I3T5"/>
<dbReference type="GeneID" id="93778443"/>
<dbReference type="KEGG" id="ecy:ECSE_3988"/>
<dbReference type="HOGENOM" id="CLU_026910_0_1_6"/>
<dbReference type="Proteomes" id="UP000008199">
    <property type="component" value="Chromosome"/>
</dbReference>
<dbReference type="GO" id="GO:0005737">
    <property type="term" value="C:cytoplasm"/>
    <property type="evidence" value="ECO:0007669"/>
    <property type="project" value="UniProtKB-SubCell"/>
</dbReference>
<dbReference type="GO" id="GO:0005886">
    <property type="term" value="C:plasma membrane"/>
    <property type="evidence" value="ECO:0007669"/>
    <property type="project" value="TreeGrafter"/>
</dbReference>
<dbReference type="GO" id="GO:0005524">
    <property type="term" value="F:ATP binding"/>
    <property type="evidence" value="ECO:0007669"/>
    <property type="project" value="UniProtKB-UniRule"/>
</dbReference>
<dbReference type="GO" id="GO:0016887">
    <property type="term" value="F:ATP hydrolysis activity"/>
    <property type="evidence" value="ECO:0007669"/>
    <property type="project" value="InterPro"/>
</dbReference>
<dbReference type="GO" id="GO:0003688">
    <property type="term" value="F:DNA replication origin binding"/>
    <property type="evidence" value="ECO:0007669"/>
    <property type="project" value="UniProtKB-UniRule"/>
</dbReference>
<dbReference type="GO" id="GO:0008289">
    <property type="term" value="F:lipid binding"/>
    <property type="evidence" value="ECO:0007669"/>
    <property type="project" value="UniProtKB-KW"/>
</dbReference>
<dbReference type="GO" id="GO:0006270">
    <property type="term" value="P:DNA replication initiation"/>
    <property type="evidence" value="ECO:0007669"/>
    <property type="project" value="UniProtKB-UniRule"/>
</dbReference>
<dbReference type="GO" id="GO:0006275">
    <property type="term" value="P:regulation of DNA replication"/>
    <property type="evidence" value="ECO:0007669"/>
    <property type="project" value="UniProtKB-UniRule"/>
</dbReference>
<dbReference type="CDD" id="cd00009">
    <property type="entry name" value="AAA"/>
    <property type="match status" value="1"/>
</dbReference>
<dbReference type="CDD" id="cd06571">
    <property type="entry name" value="Bac_DnaA_C"/>
    <property type="match status" value="1"/>
</dbReference>
<dbReference type="FunFam" id="1.10.1750.10:FF:000001">
    <property type="entry name" value="Chromosomal replication initiator protein DnaA"/>
    <property type="match status" value="1"/>
</dbReference>
<dbReference type="FunFam" id="1.10.8.60:FF:000003">
    <property type="entry name" value="Chromosomal replication initiator protein DnaA"/>
    <property type="match status" value="1"/>
</dbReference>
<dbReference type="FunFam" id="3.30.300.180:FF:000001">
    <property type="entry name" value="Chromosomal replication initiator protein DnaA"/>
    <property type="match status" value="1"/>
</dbReference>
<dbReference type="FunFam" id="3.40.50.300:FF:000103">
    <property type="entry name" value="Chromosomal replication initiator protein DnaA"/>
    <property type="match status" value="1"/>
</dbReference>
<dbReference type="Gene3D" id="1.10.1750.10">
    <property type="match status" value="1"/>
</dbReference>
<dbReference type="Gene3D" id="1.10.8.60">
    <property type="match status" value="1"/>
</dbReference>
<dbReference type="Gene3D" id="3.30.300.180">
    <property type="match status" value="1"/>
</dbReference>
<dbReference type="Gene3D" id="3.40.50.300">
    <property type="entry name" value="P-loop containing nucleotide triphosphate hydrolases"/>
    <property type="match status" value="1"/>
</dbReference>
<dbReference type="HAMAP" id="MF_00377">
    <property type="entry name" value="DnaA_bact"/>
    <property type="match status" value="1"/>
</dbReference>
<dbReference type="InterPro" id="IPR003593">
    <property type="entry name" value="AAA+_ATPase"/>
</dbReference>
<dbReference type="InterPro" id="IPR001957">
    <property type="entry name" value="Chromosome_initiator_DnaA"/>
</dbReference>
<dbReference type="InterPro" id="IPR020591">
    <property type="entry name" value="Chromosome_initiator_DnaA-like"/>
</dbReference>
<dbReference type="InterPro" id="IPR018312">
    <property type="entry name" value="Chromosome_initiator_DnaA_CS"/>
</dbReference>
<dbReference type="InterPro" id="IPR013159">
    <property type="entry name" value="DnaA_C"/>
</dbReference>
<dbReference type="InterPro" id="IPR013317">
    <property type="entry name" value="DnaA_dom"/>
</dbReference>
<dbReference type="InterPro" id="IPR024633">
    <property type="entry name" value="DnaA_N_dom"/>
</dbReference>
<dbReference type="InterPro" id="IPR038454">
    <property type="entry name" value="DnaA_N_sf"/>
</dbReference>
<dbReference type="InterPro" id="IPR027417">
    <property type="entry name" value="P-loop_NTPase"/>
</dbReference>
<dbReference type="InterPro" id="IPR010921">
    <property type="entry name" value="Trp_repressor/repl_initiator"/>
</dbReference>
<dbReference type="NCBIfam" id="TIGR00362">
    <property type="entry name" value="DnaA"/>
    <property type="match status" value="1"/>
</dbReference>
<dbReference type="PANTHER" id="PTHR30050">
    <property type="entry name" value="CHROMOSOMAL REPLICATION INITIATOR PROTEIN DNAA"/>
    <property type="match status" value="1"/>
</dbReference>
<dbReference type="PANTHER" id="PTHR30050:SF2">
    <property type="entry name" value="CHROMOSOMAL REPLICATION INITIATOR PROTEIN DNAA"/>
    <property type="match status" value="1"/>
</dbReference>
<dbReference type="Pfam" id="PF00308">
    <property type="entry name" value="Bac_DnaA"/>
    <property type="match status" value="1"/>
</dbReference>
<dbReference type="Pfam" id="PF08299">
    <property type="entry name" value="Bac_DnaA_C"/>
    <property type="match status" value="1"/>
</dbReference>
<dbReference type="Pfam" id="PF11638">
    <property type="entry name" value="DnaA_N"/>
    <property type="match status" value="1"/>
</dbReference>
<dbReference type="PRINTS" id="PR00051">
    <property type="entry name" value="DNAA"/>
</dbReference>
<dbReference type="SMART" id="SM00382">
    <property type="entry name" value="AAA"/>
    <property type="match status" value="1"/>
</dbReference>
<dbReference type="SMART" id="SM00760">
    <property type="entry name" value="Bac_DnaA_C"/>
    <property type="match status" value="1"/>
</dbReference>
<dbReference type="SUPFAM" id="SSF52540">
    <property type="entry name" value="P-loop containing nucleoside triphosphate hydrolases"/>
    <property type="match status" value="1"/>
</dbReference>
<dbReference type="SUPFAM" id="SSF48295">
    <property type="entry name" value="TrpR-like"/>
    <property type="match status" value="1"/>
</dbReference>
<dbReference type="PROSITE" id="PS01008">
    <property type="entry name" value="DNAA"/>
    <property type="match status" value="1"/>
</dbReference>
<proteinExistence type="inferred from homology"/>
<feature type="chain" id="PRO_1000121978" description="Chromosomal replication initiator protein DnaA">
    <location>
        <begin position="1"/>
        <end position="467"/>
    </location>
</feature>
<feature type="region of interest" description="Domain I, interacts with DnaA modulators" evidence="1">
    <location>
        <begin position="1"/>
        <end position="90"/>
    </location>
</feature>
<feature type="region of interest" description="Domain II" evidence="1">
    <location>
        <begin position="91"/>
        <end position="130"/>
    </location>
</feature>
<feature type="region of interest" description="Disordered" evidence="2">
    <location>
        <begin position="98"/>
        <end position="119"/>
    </location>
</feature>
<feature type="region of interest" description="Domain III, AAA+ region" evidence="1">
    <location>
        <begin position="131"/>
        <end position="347"/>
    </location>
</feature>
<feature type="region of interest" description="Domain IV, binds dsDNA" evidence="1">
    <location>
        <begin position="348"/>
        <end position="467"/>
    </location>
</feature>
<feature type="compositionally biased region" description="Low complexity" evidence="2">
    <location>
        <begin position="98"/>
        <end position="111"/>
    </location>
</feature>
<feature type="binding site" evidence="1">
    <location>
        <position position="175"/>
    </location>
    <ligand>
        <name>ATP</name>
        <dbReference type="ChEBI" id="CHEBI:30616"/>
    </ligand>
</feature>
<feature type="binding site" evidence="1">
    <location>
        <position position="177"/>
    </location>
    <ligand>
        <name>ATP</name>
        <dbReference type="ChEBI" id="CHEBI:30616"/>
    </ligand>
</feature>
<feature type="binding site" evidence="1">
    <location>
        <position position="178"/>
    </location>
    <ligand>
        <name>ATP</name>
        <dbReference type="ChEBI" id="CHEBI:30616"/>
    </ligand>
</feature>
<feature type="binding site" evidence="1">
    <location>
        <position position="179"/>
    </location>
    <ligand>
        <name>ATP</name>
        <dbReference type="ChEBI" id="CHEBI:30616"/>
    </ligand>
</feature>
<comment type="function">
    <text evidence="1">Plays an essential role in the initiation and regulation of chromosomal replication. ATP-DnaA binds to the origin of replication (oriC) to initiate formation of the DNA replication initiation complex once per cell cycle. Binds the DnaA box (a 9 base pair repeat at the origin) and separates the double-stranded (ds)DNA. Forms a right-handed helical filament on oriC DNA; dsDNA binds to the exterior of the filament while single-stranded (ss)DNA is stabiized in the filament's interior. The ATP-DnaA-oriC complex binds and stabilizes one strand of the AT-rich DNA unwinding element (DUE), permitting loading of DNA polymerase. After initiation quickly degrades to an ADP-DnaA complex that is not apt for DNA replication. Binds acidic phospholipids.</text>
</comment>
<comment type="subunit">
    <text evidence="1">Oligomerizes as a right-handed, spiral filament on DNA at oriC.</text>
</comment>
<comment type="subcellular location">
    <subcellularLocation>
        <location evidence="1">Cytoplasm</location>
    </subcellularLocation>
</comment>
<comment type="domain">
    <text evidence="1">Domain I is involved in oligomerization and binding regulators, domain II is flexibile and of varying length in different bacteria, domain III forms the AAA+ region, while domain IV binds dsDNA.</text>
</comment>
<comment type="similarity">
    <text evidence="1">Belongs to the DnaA family.</text>
</comment>
<evidence type="ECO:0000255" key="1">
    <source>
        <dbReference type="HAMAP-Rule" id="MF_00377"/>
    </source>
</evidence>
<evidence type="ECO:0000256" key="2">
    <source>
        <dbReference type="SAM" id="MobiDB-lite"/>
    </source>
</evidence>
<accession>B6I3T5</accession>
<name>DNAA_ECOSE</name>
<protein>
    <recommendedName>
        <fullName evidence="1">Chromosomal replication initiator protein DnaA</fullName>
    </recommendedName>
</protein>
<organism>
    <name type="scientific">Escherichia coli (strain SE11)</name>
    <dbReference type="NCBI Taxonomy" id="409438"/>
    <lineage>
        <taxon>Bacteria</taxon>
        <taxon>Pseudomonadati</taxon>
        <taxon>Pseudomonadota</taxon>
        <taxon>Gammaproteobacteria</taxon>
        <taxon>Enterobacterales</taxon>
        <taxon>Enterobacteriaceae</taxon>
        <taxon>Escherichia</taxon>
    </lineage>
</organism>
<sequence>MSLSLWQQCLARLQDELPATEFSMWIRPLQAELSDNTLALYAPNRFVLDWVRDKYLNNINGLLTSFCGADAPQLRFEVGTKPVTQTPQAAVTSNVAAPAQVAQTQPQRAAPSTRSGWDNVPAPAEPTYRSNVNVKHTFDNFVEGKSNQLARAAARQVADNPGGAYNPLFLYGGTGLGKTHLLHAVGNGIMARKPNAKVVYMHSERFVQDMVKALQNNAIEEFKRYYRSVDALLIDDIQFFANKERSQEEFFHTFNALLEGNQQIILTSDRYPKEINGVEDRLKSRFGWGLTVAIEPPELETRVAILMKKADENDIRLPGEVAFFIAKRLRSNVRELEGALNRVIANANFTGRAITIDFVREALRDLLALQEKLVTIDNIQKTVAEYYKIKVADLLSKRRSRSVARPRQMAMALAKELTNHSLPEIGDAFGGRDHTTVLHACRKIEQLREESHDIKEDFSNLIRTLSS</sequence>